<reference key="1">
    <citation type="journal article" date="2006" name="Genome Res.">
        <title>Skewed genomic variability in strains of the toxigenic bacterial pathogen, Clostridium perfringens.</title>
        <authorList>
            <person name="Myers G.S.A."/>
            <person name="Rasko D.A."/>
            <person name="Cheung J.K."/>
            <person name="Ravel J."/>
            <person name="Seshadri R."/>
            <person name="DeBoy R.T."/>
            <person name="Ren Q."/>
            <person name="Varga J."/>
            <person name="Awad M.M."/>
            <person name="Brinkac L.M."/>
            <person name="Daugherty S.C."/>
            <person name="Haft D.H."/>
            <person name="Dodson R.J."/>
            <person name="Madupu R."/>
            <person name="Nelson W.C."/>
            <person name="Rosovitz M.J."/>
            <person name="Sullivan S.A."/>
            <person name="Khouri H."/>
            <person name="Dimitrov G.I."/>
            <person name="Watkins K.L."/>
            <person name="Mulligan S."/>
            <person name="Benton J."/>
            <person name="Radune D."/>
            <person name="Fisher D.J."/>
            <person name="Atkins H.S."/>
            <person name="Hiscox T."/>
            <person name="Jost B.H."/>
            <person name="Billington S.J."/>
            <person name="Songer J.G."/>
            <person name="McClane B.A."/>
            <person name="Titball R.W."/>
            <person name="Rood J.I."/>
            <person name="Melville S.B."/>
            <person name="Paulsen I.T."/>
        </authorList>
    </citation>
    <scope>NUCLEOTIDE SEQUENCE [LARGE SCALE GENOMIC DNA]</scope>
    <source>
        <strain>ATCC 13124 / DSM 756 / JCM 1290 / NCIMB 6125 / NCTC 8237 / S 107 / Type A</strain>
    </source>
</reference>
<reference key="2">
    <citation type="journal article" date="1997" name="FEMS Microbiol. Lett.">
        <title>Collagenase gene (colA) is located in the 3'-flanking region of the perfringolysin O (pfoA) locus in Clostridium perfringens.</title>
        <authorList>
            <person name="Ohtani K."/>
            <person name="Bando M."/>
            <person name="Swe T."/>
            <person name="Banu S."/>
            <person name="Oe M."/>
            <person name="Hayashi H."/>
            <person name="Shimizu T."/>
        </authorList>
    </citation>
    <scope>NUCLEOTIDE SEQUENCE [GENOMIC DNA] OF 1-222</scope>
</reference>
<accession>Q0TUR4</accession>
<accession>Q46169</accession>
<accession>Q46255</accession>
<evidence type="ECO:0000250" key="1"/>
<evidence type="ECO:0000255" key="2">
    <source>
        <dbReference type="HAMAP-Rule" id="MF_01109"/>
    </source>
</evidence>
<evidence type="ECO:0000305" key="3"/>
<comment type="function">
    <text evidence="1">Reversibly catalyzes the transfer of the carbamoyl group from carbamoyl phosphate (CP) to the N(epsilon) atom of ornithine (ORN) to produce L-citrulline.</text>
</comment>
<comment type="catalytic activity">
    <reaction>
        <text>carbamoyl phosphate + L-ornithine = L-citrulline + phosphate + H(+)</text>
        <dbReference type="Rhea" id="RHEA:19513"/>
        <dbReference type="ChEBI" id="CHEBI:15378"/>
        <dbReference type="ChEBI" id="CHEBI:43474"/>
        <dbReference type="ChEBI" id="CHEBI:46911"/>
        <dbReference type="ChEBI" id="CHEBI:57743"/>
        <dbReference type="ChEBI" id="CHEBI:58228"/>
        <dbReference type="EC" id="2.1.3.3"/>
    </reaction>
</comment>
<comment type="pathway">
    <text>Amino-acid degradation; L-arginine degradation via ADI pathway; carbamoyl phosphate from L-arginine: step 2/2.</text>
</comment>
<comment type="subcellular location">
    <subcellularLocation>
        <location evidence="1">Cytoplasm</location>
    </subcellularLocation>
</comment>
<comment type="similarity">
    <text evidence="3">Belongs to the aspartate/ornithine carbamoyltransferase superfamily. OTCase family.</text>
</comment>
<keyword id="KW-0056">Arginine metabolism</keyword>
<keyword id="KW-0963">Cytoplasm</keyword>
<keyword id="KW-0808">Transferase</keyword>
<name>OTCC_CLOP1</name>
<dbReference type="EC" id="2.1.3.3"/>
<dbReference type="EMBL" id="CP000246">
    <property type="protein sequence ID" value="ABG84847.1"/>
    <property type="molecule type" value="Genomic_DNA"/>
</dbReference>
<dbReference type="EMBL" id="X97684">
    <property type="protein sequence ID" value="CAA66276.1"/>
    <property type="molecule type" value="Genomic_DNA"/>
</dbReference>
<dbReference type="SMR" id="Q0TUR4"/>
<dbReference type="STRING" id="195103.CPF_0162"/>
<dbReference type="PaxDb" id="195103-CPF_0162"/>
<dbReference type="KEGG" id="cpf:CPF_0162"/>
<dbReference type="eggNOG" id="COG0078">
    <property type="taxonomic scope" value="Bacteria"/>
</dbReference>
<dbReference type="HOGENOM" id="CLU_043846_3_1_9"/>
<dbReference type="UniPathway" id="UPA00254">
    <property type="reaction ID" value="UER00365"/>
</dbReference>
<dbReference type="Proteomes" id="UP000001823">
    <property type="component" value="Chromosome"/>
</dbReference>
<dbReference type="GO" id="GO:0005737">
    <property type="term" value="C:cytoplasm"/>
    <property type="evidence" value="ECO:0007669"/>
    <property type="project" value="UniProtKB-SubCell"/>
</dbReference>
<dbReference type="GO" id="GO:0016597">
    <property type="term" value="F:amino acid binding"/>
    <property type="evidence" value="ECO:0007669"/>
    <property type="project" value="InterPro"/>
</dbReference>
<dbReference type="GO" id="GO:0004585">
    <property type="term" value="F:ornithine carbamoyltransferase activity"/>
    <property type="evidence" value="ECO:0007669"/>
    <property type="project" value="UniProtKB-UniRule"/>
</dbReference>
<dbReference type="GO" id="GO:0042450">
    <property type="term" value="P:arginine biosynthetic process via ornithine"/>
    <property type="evidence" value="ECO:0007669"/>
    <property type="project" value="TreeGrafter"/>
</dbReference>
<dbReference type="GO" id="GO:0019547">
    <property type="term" value="P:arginine catabolic process to ornithine"/>
    <property type="evidence" value="ECO:0007669"/>
    <property type="project" value="UniProtKB-UniRule"/>
</dbReference>
<dbReference type="GO" id="GO:0019240">
    <property type="term" value="P:citrulline biosynthetic process"/>
    <property type="evidence" value="ECO:0007669"/>
    <property type="project" value="TreeGrafter"/>
</dbReference>
<dbReference type="FunFam" id="3.40.50.1370:FF:000008">
    <property type="entry name" value="Ornithine carbamoyltransferase"/>
    <property type="match status" value="1"/>
</dbReference>
<dbReference type="Gene3D" id="3.40.50.1370">
    <property type="entry name" value="Aspartate/ornithine carbamoyltransferase"/>
    <property type="match status" value="2"/>
</dbReference>
<dbReference type="HAMAP" id="MF_01109">
    <property type="entry name" value="OTCase"/>
    <property type="match status" value="1"/>
</dbReference>
<dbReference type="InterPro" id="IPR006132">
    <property type="entry name" value="Asp/Orn_carbamoyltranf_P-bd"/>
</dbReference>
<dbReference type="InterPro" id="IPR006130">
    <property type="entry name" value="Asp/Orn_carbamoylTrfase"/>
</dbReference>
<dbReference type="InterPro" id="IPR036901">
    <property type="entry name" value="Asp/Orn_carbamoylTrfase_sf"/>
</dbReference>
<dbReference type="InterPro" id="IPR006131">
    <property type="entry name" value="Asp_carbamoyltransf_Asp/Orn-bd"/>
</dbReference>
<dbReference type="InterPro" id="IPR002292">
    <property type="entry name" value="Orn/put_carbamltrans"/>
</dbReference>
<dbReference type="InterPro" id="IPR024904">
    <property type="entry name" value="OTCase_ArgI"/>
</dbReference>
<dbReference type="NCBIfam" id="TIGR00658">
    <property type="entry name" value="orni_carb_tr"/>
    <property type="match status" value="1"/>
</dbReference>
<dbReference type="NCBIfam" id="NF003286">
    <property type="entry name" value="PRK04284.1"/>
    <property type="match status" value="1"/>
</dbReference>
<dbReference type="PANTHER" id="PTHR45753:SF2">
    <property type="entry name" value="ORNITHINE CARBAMOYLTRANSFERASE"/>
    <property type="match status" value="1"/>
</dbReference>
<dbReference type="PANTHER" id="PTHR45753">
    <property type="entry name" value="ORNITHINE CARBAMOYLTRANSFERASE, MITOCHONDRIAL"/>
    <property type="match status" value="1"/>
</dbReference>
<dbReference type="Pfam" id="PF00185">
    <property type="entry name" value="OTCace"/>
    <property type="match status" value="1"/>
</dbReference>
<dbReference type="Pfam" id="PF02729">
    <property type="entry name" value="OTCace_N"/>
    <property type="match status" value="1"/>
</dbReference>
<dbReference type="PRINTS" id="PR00100">
    <property type="entry name" value="AOTCASE"/>
</dbReference>
<dbReference type="PRINTS" id="PR00102">
    <property type="entry name" value="OTCASE"/>
</dbReference>
<dbReference type="SUPFAM" id="SSF53671">
    <property type="entry name" value="Aspartate/ornithine carbamoyltransferase"/>
    <property type="match status" value="1"/>
</dbReference>
<dbReference type="PROSITE" id="PS00097">
    <property type="entry name" value="CARBAMOYLTRANSFERASE"/>
    <property type="match status" value="1"/>
</dbReference>
<protein>
    <recommendedName>
        <fullName>Ornithine carbamoyltransferase, catabolic</fullName>
        <shortName>OTCase</shortName>
        <ecNumber>2.1.3.3</ecNumber>
    </recommendedName>
</protein>
<organism>
    <name type="scientific">Clostridium perfringens (strain ATCC 13124 / DSM 756 / JCM 1290 / NCIMB 6125 / NCTC 8237 / Type A)</name>
    <dbReference type="NCBI Taxonomy" id="195103"/>
    <lineage>
        <taxon>Bacteria</taxon>
        <taxon>Bacillati</taxon>
        <taxon>Bacillota</taxon>
        <taxon>Clostridia</taxon>
        <taxon>Eubacteriales</taxon>
        <taxon>Clostridiaceae</taxon>
        <taxon>Clostridium</taxon>
    </lineage>
</organism>
<sequence>MAVNLKGRSFLTLKDFTPAEIRYLLDLSHDLKAKKRAGILGDSLKGKNVVLLFEKTSTRTRCAFECGAAEEGAHVTFLTNSQMGKKESIEDTAKVLGRMYDGIEFRGFKQSTVEELAKHAGVPVWNGLTDADHPTQILADFLTIEEHAHKPLSEIKLVFTGDTRNNMSYALMYGAAKMGMHFVALGPDSLKPDEDILKEMQEYSKETGATIEFSSNVDEAVKGADVIYTDIWVSMGEDESLYPERVKLLTPYKVTREMMNKTGNKNTLFMHCLPSFHDEDTEVCKDMMDRLGLDIREVEDEVFRSKNSVVFDEAENRMHTIKAVMVATAGR</sequence>
<proteinExistence type="inferred from homology"/>
<feature type="chain" id="PRO_0000273585" description="Ornithine carbamoyltransferase, catabolic">
    <location>
        <begin position="1"/>
        <end position="331"/>
    </location>
</feature>
<feature type="binding site" evidence="2">
    <location>
        <begin position="57"/>
        <end position="60"/>
    </location>
    <ligand>
        <name>carbamoyl phosphate</name>
        <dbReference type="ChEBI" id="CHEBI:58228"/>
    </ligand>
</feature>
<feature type="binding site" evidence="2">
    <location>
        <position position="82"/>
    </location>
    <ligand>
        <name>carbamoyl phosphate</name>
        <dbReference type="ChEBI" id="CHEBI:58228"/>
    </ligand>
</feature>
<feature type="binding site" evidence="2">
    <location>
        <position position="106"/>
    </location>
    <ligand>
        <name>carbamoyl phosphate</name>
        <dbReference type="ChEBI" id="CHEBI:58228"/>
    </ligand>
</feature>
<feature type="binding site" evidence="2">
    <location>
        <begin position="133"/>
        <end position="136"/>
    </location>
    <ligand>
        <name>carbamoyl phosphate</name>
        <dbReference type="ChEBI" id="CHEBI:58228"/>
    </ligand>
</feature>
<feature type="binding site" evidence="2">
    <location>
        <position position="166"/>
    </location>
    <ligand>
        <name>L-ornithine</name>
        <dbReference type="ChEBI" id="CHEBI:46911"/>
    </ligand>
</feature>
<feature type="binding site" evidence="2">
    <location>
        <position position="230"/>
    </location>
    <ligand>
        <name>L-ornithine</name>
        <dbReference type="ChEBI" id="CHEBI:46911"/>
    </ligand>
</feature>
<feature type="binding site" evidence="2">
    <location>
        <begin position="234"/>
        <end position="235"/>
    </location>
    <ligand>
        <name>L-ornithine</name>
        <dbReference type="ChEBI" id="CHEBI:46911"/>
    </ligand>
</feature>
<feature type="binding site" evidence="2">
    <location>
        <begin position="272"/>
        <end position="273"/>
    </location>
    <ligand>
        <name>carbamoyl phosphate</name>
        <dbReference type="ChEBI" id="CHEBI:58228"/>
    </ligand>
</feature>
<feature type="binding site" evidence="2">
    <location>
        <position position="317"/>
    </location>
    <ligand>
        <name>carbamoyl phosphate</name>
        <dbReference type="ChEBI" id="CHEBI:58228"/>
    </ligand>
</feature>
<feature type="sequence conflict" description="In Ref. 2; CAA66276." evidence="3" ref="2">
    <original>W</original>
    <variation>V</variation>
    <location>
        <position position="125"/>
    </location>
</feature>
<feature type="sequence conflict" description="In Ref. 2; CAA66276." evidence="3" ref="2">
    <location>
        <begin position="146"/>
        <end position="147"/>
    </location>
</feature>
<feature type="sequence conflict" description="In Ref. 2; CAA66276." evidence="3" ref="2">
    <location>
        <begin position="208"/>
        <end position="210"/>
    </location>
</feature>
<gene>
    <name type="primary">arcB</name>
    <name type="ordered locus">CPF_0162</name>
</gene>